<name>VE39_NPVOP</name>
<feature type="chain" id="PRO_0000132860" description="Early 39 kDa protein">
    <location>
        <begin position="1"/>
        <end position="261"/>
    </location>
</feature>
<feature type="region of interest" description="Disordered" evidence="1">
    <location>
        <begin position="215"/>
        <end position="261"/>
    </location>
</feature>
<feature type="compositionally biased region" description="Polar residues" evidence="1">
    <location>
        <begin position="250"/>
        <end position="261"/>
    </location>
</feature>
<dbReference type="EMBL" id="D13375">
    <property type="protein sequence ID" value="BAA02638.1"/>
    <property type="molecule type" value="Genomic_DNA"/>
</dbReference>
<dbReference type="EMBL" id="U75930">
    <property type="protein sequence ID" value="AAC59023.1"/>
    <property type="molecule type" value="Genomic_DNA"/>
</dbReference>
<dbReference type="PIR" id="JQ2028">
    <property type="entry name" value="JQ2028"/>
</dbReference>
<dbReference type="RefSeq" id="NP_046180.1">
    <property type="nucleotide sequence ID" value="NC_001875.2"/>
</dbReference>
<dbReference type="KEGG" id="vg:911983"/>
<dbReference type="OrthoDB" id="13554at10239"/>
<dbReference type="Proteomes" id="UP000009248">
    <property type="component" value="Genome"/>
</dbReference>
<dbReference type="InterPro" id="IPR007975">
    <property type="entry name" value="Baculo_pp39"/>
</dbReference>
<dbReference type="Pfam" id="PF05311">
    <property type="entry name" value="Baculo_PP31"/>
    <property type="match status" value="1"/>
</dbReference>
<evidence type="ECO:0000256" key="1">
    <source>
        <dbReference type="SAM" id="MobiDB-lite"/>
    </source>
</evidence>
<organism>
    <name type="scientific">Orgyia pseudotsugata multicapsid polyhedrosis virus</name>
    <name type="common">OpMNPV</name>
    <dbReference type="NCBI Taxonomy" id="262177"/>
    <lineage>
        <taxon>Viruses</taxon>
        <taxon>Viruses incertae sedis</taxon>
        <taxon>Naldaviricetes</taxon>
        <taxon>Lefavirales</taxon>
        <taxon>Baculoviridae</taxon>
        <taxon>Alphabaculovirus</taxon>
        <taxon>Alphabaculovirus orpseudotsugatae</taxon>
    </lineage>
</organism>
<protein>
    <recommendedName>
        <fullName>Early 39 kDa protein</fullName>
    </recommendedName>
</protein>
<accession>Q05121</accession>
<sequence>MVNLPDNVHEESFANNNASLISRLENSAFNKSNFEYLKTCINFFEKKSVNYTVVALPCSGDERKASKRPKRVNNHNMYILFNSFYTKIRRPEWPNSPTMWDTVKAHKELSDFVRVFDHTQKLGKSITSRSASSSSFTETNGKRRRSVITNVAEVQENCDQRDKLYSEFYSLLNETFKTGVAPATSNIYDSVITRELLTKNMELFKNIALKLPSPSYVPTPVSNKKRRAPPSAPKKIAKQRRDTKPPPTYVSDNTQDTNMSE</sequence>
<organismHost>
    <name type="scientific">Orgyia pseudotsugata</name>
    <name type="common">Douglas-fir tussock moth</name>
    <dbReference type="NCBI Taxonomy" id="33414"/>
</organismHost>
<keyword id="KW-0244">Early protein</keyword>
<keyword id="KW-1185">Reference proteome</keyword>
<gene>
    <name type="ORF">ORF24</name>
</gene>
<proteinExistence type="predicted"/>
<reference key="1">
    <citation type="journal article" date="1993" name="J. Gen. Virol.">
        <title>Nucleotide sequence of the ubiquitin-39K gene region from the Orgyia pseudotsugata multinucleocapsid nuclear polyhedrosis virus genome.</title>
        <authorList>
            <person name="Russell R.L.Q."/>
            <person name="Rohrmann G.F."/>
        </authorList>
    </citation>
    <scope>NUCLEOTIDE SEQUENCE [GENOMIC DNA]</scope>
</reference>
<reference key="2">
    <citation type="journal article" date="1997" name="Virology">
        <title>The sequence of the Orgyia pseudotsugata multinucleocapsid nuclear polyhedrosis virus genome.</title>
        <authorList>
            <person name="Ahrens C.H."/>
            <person name="Russell R.R."/>
            <person name="Funk C.J."/>
            <person name="Evans J."/>
            <person name="Harwood S."/>
            <person name="Rohrmann G.F."/>
        </authorList>
    </citation>
    <scope>NUCLEOTIDE SEQUENCE [LARGE SCALE GENOMIC DNA]</scope>
</reference>